<reference key="1">
    <citation type="journal article" date="2008" name="Environ. Microbiol.">
        <title>The genome of Erwinia tasmaniensis strain Et1/99, a non-pathogenic bacterium in the genus Erwinia.</title>
        <authorList>
            <person name="Kube M."/>
            <person name="Migdoll A.M."/>
            <person name="Mueller I."/>
            <person name="Kuhl H."/>
            <person name="Beck A."/>
            <person name="Reinhardt R."/>
            <person name="Geider K."/>
        </authorList>
    </citation>
    <scope>NUCLEOTIDE SEQUENCE [LARGE SCALE GENOMIC DNA]</scope>
    <source>
        <strain>DSM 17950 / CFBP 7177 / CIP 109463 / NCPPB 4357 / Et1/99</strain>
    </source>
</reference>
<protein>
    <recommendedName>
        <fullName evidence="1">4-hydroxythreonine-4-phosphate dehydrogenase</fullName>
        <ecNumber evidence="1">1.1.1.262</ecNumber>
    </recommendedName>
    <alternativeName>
        <fullName evidence="1">4-(phosphohydroxy)-L-threonine dehydrogenase</fullName>
    </alternativeName>
</protein>
<sequence>MLSKQRVVITSGEPAGIGPDLVVQLAQQDWPVELVVCADPELLRDRAAVLRLPLTLREYQPGTDAQPQQAGSLTVLPAHLAQPVNAGELCVDNSHYVLETLARACDGCLSGEFAALITGPVHKGAINDAGIPFSGHTEFFAERARCERVVMMLATEELRVALATTHLPLKDVAASITRTTLHEVITILYQDLQSKFGRAEPHIFVCGLNPHAGEGGHMGREEIDVIIPALDELRQQGMKLTGPLPADTLFQPKYLQHADAVLAMYHDQGLPVLKYQGFGRAVNITLGLPFIRTSVDHGTALELAGSGQADAGSFKTALNLAITMIKSSNE</sequence>
<name>PDXA_ERWT9</name>
<proteinExistence type="inferred from homology"/>
<comment type="function">
    <text evidence="1">Catalyzes the NAD(P)-dependent oxidation of 4-(phosphooxy)-L-threonine (HTP) into 2-amino-3-oxo-4-(phosphooxy)butyric acid which spontaneously decarboxylates to form 3-amino-2-oxopropyl phosphate (AHAP).</text>
</comment>
<comment type="catalytic activity">
    <reaction evidence="1">
        <text>4-(phosphooxy)-L-threonine + NAD(+) = 3-amino-2-oxopropyl phosphate + CO2 + NADH</text>
        <dbReference type="Rhea" id="RHEA:32275"/>
        <dbReference type="ChEBI" id="CHEBI:16526"/>
        <dbReference type="ChEBI" id="CHEBI:57279"/>
        <dbReference type="ChEBI" id="CHEBI:57540"/>
        <dbReference type="ChEBI" id="CHEBI:57945"/>
        <dbReference type="ChEBI" id="CHEBI:58452"/>
        <dbReference type="EC" id="1.1.1.262"/>
    </reaction>
</comment>
<comment type="cofactor">
    <cofactor evidence="1">
        <name>Zn(2+)</name>
        <dbReference type="ChEBI" id="CHEBI:29105"/>
    </cofactor>
    <cofactor evidence="1">
        <name>Mg(2+)</name>
        <dbReference type="ChEBI" id="CHEBI:18420"/>
    </cofactor>
    <cofactor evidence="1">
        <name>Co(2+)</name>
        <dbReference type="ChEBI" id="CHEBI:48828"/>
    </cofactor>
    <text evidence="1">Binds 1 divalent metal cation per subunit. Can use ions such as Zn(2+), Mg(2+) or Co(2+).</text>
</comment>
<comment type="pathway">
    <text evidence="1">Cofactor biosynthesis; pyridoxine 5'-phosphate biosynthesis; pyridoxine 5'-phosphate from D-erythrose 4-phosphate: step 4/5.</text>
</comment>
<comment type="subunit">
    <text evidence="1">Homodimer.</text>
</comment>
<comment type="subcellular location">
    <subcellularLocation>
        <location evidence="1">Cytoplasm</location>
    </subcellularLocation>
</comment>
<comment type="miscellaneous">
    <text evidence="1">The active site is located at the dimer interface.</text>
</comment>
<comment type="similarity">
    <text evidence="1">Belongs to the PdxA family.</text>
</comment>
<accession>B2VGP9</accession>
<gene>
    <name evidence="1" type="primary">pdxA</name>
    <name type="ordered locus">ETA_07250</name>
</gene>
<dbReference type="EC" id="1.1.1.262" evidence="1"/>
<dbReference type="EMBL" id="CU468135">
    <property type="protein sequence ID" value="CAO95771.1"/>
    <property type="molecule type" value="Genomic_DNA"/>
</dbReference>
<dbReference type="RefSeq" id="WP_012440473.1">
    <property type="nucleotide sequence ID" value="NC_010694.1"/>
</dbReference>
<dbReference type="SMR" id="B2VGP9"/>
<dbReference type="STRING" id="465817.ETA_07250"/>
<dbReference type="KEGG" id="eta:ETA_07250"/>
<dbReference type="eggNOG" id="COG1995">
    <property type="taxonomic scope" value="Bacteria"/>
</dbReference>
<dbReference type="HOGENOM" id="CLU_040168_2_0_6"/>
<dbReference type="OrthoDB" id="9801783at2"/>
<dbReference type="UniPathway" id="UPA00244">
    <property type="reaction ID" value="UER00312"/>
</dbReference>
<dbReference type="Proteomes" id="UP000001726">
    <property type="component" value="Chromosome"/>
</dbReference>
<dbReference type="GO" id="GO:0005737">
    <property type="term" value="C:cytoplasm"/>
    <property type="evidence" value="ECO:0007669"/>
    <property type="project" value="UniProtKB-SubCell"/>
</dbReference>
<dbReference type="GO" id="GO:0050570">
    <property type="term" value="F:4-hydroxythreonine-4-phosphate dehydrogenase activity"/>
    <property type="evidence" value="ECO:0007669"/>
    <property type="project" value="UniProtKB-UniRule"/>
</dbReference>
<dbReference type="GO" id="GO:0050897">
    <property type="term" value="F:cobalt ion binding"/>
    <property type="evidence" value="ECO:0007669"/>
    <property type="project" value="UniProtKB-UniRule"/>
</dbReference>
<dbReference type="GO" id="GO:0000287">
    <property type="term" value="F:magnesium ion binding"/>
    <property type="evidence" value="ECO:0007669"/>
    <property type="project" value="UniProtKB-UniRule"/>
</dbReference>
<dbReference type="GO" id="GO:0051287">
    <property type="term" value="F:NAD binding"/>
    <property type="evidence" value="ECO:0007669"/>
    <property type="project" value="InterPro"/>
</dbReference>
<dbReference type="GO" id="GO:0008270">
    <property type="term" value="F:zinc ion binding"/>
    <property type="evidence" value="ECO:0007669"/>
    <property type="project" value="UniProtKB-UniRule"/>
</dbReference>
<dbReference type="GO" id="GO:0042823">
    <property type="term" value="P:pyridoxal phosphate biosynthetic process"/>
    <property type="evidence" value="ECO:0007669"/>
    <property type="project" value="UniProtKB-UniRule"/>
</dbReference>
<dbReference type="GO" id="GO:0008615">
    <property type="term" value="P:pyridoxine biosynthetic process"/>
    <property type="evidence" value="ECO:0007669"/>
    <property type="project" value="UniProtKB-UniRule"/>
</dbReference>
<dbReference type="FunFam" id="3.40.718.10:FF:000010">
    <property type="entry name" value="4-hydroxythreonine-4-phosphate dehydrogenase"/>
    <property type="match status" value="1"/>
</dbReference>
<dbReference type="Gene3D" id="3.40.718.10">
    <property type="entry name" value="Isopropylmalate Dehydrogenase"/>
    <property type="match status" value="1"/>
</dbReference>
<dbReference type="HAMAP" id="MF_00536">
    <property type="entry name" value="PdxA"/>
    <property type="match status" value="1"/>
</dbReference>
<dbReference type="InterPro" id="IPR037510">
    <property type="entry name" value="PdxA"/>
</dbReference>
<dbReference type="InterPro" id="IPR005255">
    <property type="entry name" value="PdxA_fam"/>
</dbReference>
<dbReference type="NCBIfam" id="TIGR00557">
    <property type="entry name" value="pdxA"/>
    <property type="match status" value="1"/>
</dbReference>
<dbReference type="PANTHER" id="PTHR30004">
    <property type="entry name" value="4-HYDROXYTHREONINE-4-PHOSPHATE DEHYDROGENASE"/>
    <property type="match status" value="1"/>
</dbReference>
<dbReference type="PANTHER" id="PTHR30004:SF5">
    <property type="entry name" value="4-HYDROXYTHREONINE-4-PHOSPHATE DEHYDROGENASE"/>
    <property type="match status" value="1"/>
</dbReference>
<dbReference type="Pfam" id="PF04166">
    <property type="entry name" value="PdxA"/>
    <property type="match status" value="1"/>
</dbReference>
<dbReference type="SUPFAM" id="SSF53659">
    <property type="entry name" value="Isocitrate/Isopropylmalate dehydrogenase-like"/>
    <property type="match status" value="1"/>
</dbReference>
<evidence type="ECO:0000255" key="1">
    <source>
        <dbReference type="HAMAP-Rule" id="MF_00536"/>
    </source>
</evidence>
<organism>
    <name type="scientific">Erwinia tasmaniensis (strain DSM 17950 / CFBP 7177 / CIP 109463 / NCPPB 4357 / Et1/99)</name>
    <dbReference type="NCBI Taxonomy" id="465817"/>
    <lineage>
        <taxon>Bacteria</taxon>
        <taxon>Pseudomonadati</taxon>
        <taxon>Pseudomonadota</taxon>
        <taxon>Gammaproteobacteria</taxon>
        <taxon>Enterobacterales</taxon>
        <taxon>Erwiniaceae</taxon>
        <taxon>Erwinia</taxon>
    </lineage>
</organism>
<keyword id="KW-0170">Cobalt</keyword>
<keyword id="KW-0963">Cytoplasm</keyword>
<keyword id="KW-0460">Magnesium</keyword>
<keyword id="KW-0479">Metal-binding</keyword>
<keyword id="KW-0520">NAD</keyword>
<keyword id="KW-0521">NADP</keyword>
<keyword id="KW-0560">Oxidoreductase</keyword>
<keyword id="KW-0664">Pyridoxine biosynthesis</keyword>
<keyword id="KW-1185">Reference proteome</keyword>
<keyword id="KW-0862">Zinc</keyword>
<feature type="chain" id="PRO_1000128248" description="4-hydroxythreonine-4-phosphate dehydrogenase">
    <location>
        <begin position="1"/>
        <end position="330"/>
    </location>
</feature>
<feature type="binding site" evidence="1">
    <location>
        <position position="136"/>
    </location>
    <ligand>
        <name>substrate</name>
    </ligand>
</feature>
<feature type="binding site" evidence="1">
    <location>
        <position position="137"/>
    </location>
    <ligand>
        <name>substrate</name>
    </ligand>
</feature>
<feature type="binding site" evidence="1">
    <location>
        <position position="166"/>
    </location>
    <ligand>
        <name>a divalent metal cation</name>
        <dbReference type="ChEBI" id="CHEBI:60240"/>
        <note>ligand shared between dimeric partners</note>
    </ligand>
</feature>
<feature type="binding site" evidence="1">
    <location>
        <position position="211"/>
    </location>
    <ligand>
        <name>a divalent metal cation</name>
        <dbReference type="ChEBI" id="CHEBI:60240"/>
        <note>ligand shared between dimeric partners</note>
    </ligand>
</feature>
<feature type="binding site" evidence="1">
    <location>
        <position position="266"/>
    </location>
    <ligand>
        <name>a divalent metal cation</name>
        <dbReference type="ChEBI" id="CHEBI:60240"/>
        <note>ligand shared between dimeric partners</note>
    </ligand>
</feature>
<feature type="binding site" evidence="1">
    <location>
        <position position="274"/>
    </location>
    <ligand>
        <name>substrate</name>
    </ligand>
</feature>
<feature type="binding site" evidence="1">
    <location>
        <position position="283"/>
    </location>
    <ligand>
        <name>substrate</name>
    </ligand>
</feature>
<feature type="binding site" evidence="1">
    <location>
        <position position="292"/>
    </location>
    <ligand>
        <name>substrate</name>
    </ligand>
</feature>